<comment type="function">
    <text>Participates in various redox reactions through the reversible oxidation of its active center dithiol to a disulfide and catalyzes dithiol-disulfide exchange reactions.</text>
</comment>
<comment type="similarity">
    <text evidence="3">Belongs to the thioredoxin family.</text>
</comment>
<comment type="caution">
    <text evidence="3">Has not been found in the genome sequence, yet it seems to be really from D.discoideum.</text>
</comment>
<name>THIO2_DICDI</name>
<feature type="chain" id="PRO_0000120030" description="Thioredoxin-2">
    <location>
        <begin position="1"/>
        <end position="88" status="greater than"/>
    </location>
</feature>
<feature type="domain" description="Thioredoxin" evidence="2">
    <location>
        <begin position="2"/>
        <end position="88" status="greater than"/>
    </location>
</feature>
<feature type="active site" description="Nucleophile" evidence="1">
    <location>
        <position position="31"/>
    </location>
</feature>
<feature type="active site" description="Nucleophile" evidence="1">
    <location>
        <position position="34"/>
    </location>
</feature>
<feature type="site" description="Deprotonates C-terminal active site Cys" evidence="1">
    <location>
        <position position="25"/>
    </location>
</feature>
<feature type="site" description="Contributes to redox potential value" evidence="1">
    <location>
        <position position="32"/>
    </location>
</feature>
<feature type="site" description="Contributes to redox potential value" evidence="1">
    <location>
        <position position="33"/>
    </location>
</feature>
<feature type="disulfide bond" description="Redox-active" evidence="2">
    <location>
        <begin position="31"/>
        <end position="34"/>
    </location>
</feature>
<feature type="non-terminal residue">
    <location>
        <position position="88"/>
    </location>
</feature>
<keyword id="KW-1015">Disulfide bond</keyword>
<keyword id="KW-0249">Electron transport</keyword>
<keyword id="KW-0676">Redox-active center</keyword>
<keyword id="KW-0813">Transport</keyword>
<accession>P29446</accession>
<proteinExistence type="evidence at transcript level"/>
<organism>
    <name type="scientific">Dictyostelium discoideum</name>
    <name type="common">Social amoeba</name>
    <dbReference type="NCBI Taxonomy" id="44689"/>
    <lineage>
        <taxon>Eukaryota</taxon>
        <taxon>Amoebozoa</taxon>
        <taxon>Evosea</taxon>
        <taxon>Eumycetozoa</taxon>
        <taxon>Dictyostelia</taxon>
        <taxon>Dictyosteliales</taxon>
        <taxon>Dictyosteliaceae</taxon>
        <taxon>Dictyostelium</taxon>
    </lineage>
</organism>
<dbReference type="EMBL" id="M91382">
    <property type="protein sequence ID" value="AAA33259.1"/>
    <property type="molecule type" value="mRNA"/>
</dbReference>
<dbReference type="PIR" id="B46264">
    <property type="entry name" value="B46264"/>
</dbReference>
<dbReference type="SMR" id="P29446"/>
<dbReference type="VEuPathDB" id="AmoebaDB:DDB_G0294489"/>
<dbReference type="OMA" id="EYDAMFI"/>
<dbReference type="GO" id="GO:0003756">
    <property type="term" value="F:protein disulfide isomerase activity"/>
    <property type="evidence" value="ECO:0000250"/>
    <property type="project" value="dictyBase"/>
</dbReference>
<dbReference type="GO" id="GO:0004791">
    <property type="term" value="F:thioredoxin-disulfide reductase (NADPH) activity"/>
    <property type="evidence" value="ECO:0000250"/>
    <property type="project" value="dictyBase"/>
</dbReference>
<dbReference type="GO" id="GO:0045454">
    <property type="term" value="P:cell redox homeostasis"/>
    <property type="evidence" value="ECO:0000250"/>
    <property type="project" value="dictyBase"/>
</dbReference>
<dbReference type="GO" id="GO:0006457">
    <property type="term" value="P:protein folding"/>
    <property type="evidence" value="ECO:0000250"/>
    <property type="project" value="dictyBase"/>
</dbReference>
<dbReference type="CDD" id="cd02947">
    <property type="entry name" value="TRX_family"/>
    <property type="match status" value="1"/>
</dbReference>
<dbReference type="FunFam" id="3.40.30.10:FF:000245">
    <property type="entry name" value="Thioredoxin"/>
    <property type="match status" value="1"/>
</dbReference>
<dbReference type="Gene3D" id="3.40.30.10">
    <property type="entry name" value="Glutaredoxin"/>
    <property type="match status" value="1"/>
</dbReference>
<dbReference type="InterPro" id="IPR005746">
    <property type="entry name" value="Thioredoxin"/>
</dbReference>
<dbReference type="InterPro" id="IPR036249">
    <property type="entry name" value="Thioredoxin-like_sf"/>
</dbReference>
<dbReference type="InterPro" id="IPR017937">
    <property type="entry name" value="Thioredoxin_CS"/>
</dbReference>
<dbReference type="InterPro" id="IPR013766">
    <property type="entry name" value="Thioredoxin_domain"/>
</dbReference>
<dbReference type="PANTHER" id="PTHR46115">
    <property type="entry name" value="THIOREDOXIN-LIKE PROTEIN 1"/>
    <property type="match status" value="1"/>
</dbReference>
<dbReference type="Pfam" id="PF00085">
    <property type="entry name" value="Thioredoxin"/>
    <property type="match status" value="1"/>
</dbReference>
<dbReference type="PIRSF" id="PIRSF000077">
    <property type="entry name" value="Thioredoxin"/>
    <property type="match status" value="1"/>
</dbReference>
<dbReference type="PRINTS" id="PR00421">
    <property type="entry name" value="THIOREDOXIN"/>
</dbReference>
<dbReference type="SUPFAM" id="SSF52833">
    <property type="entry name" value="Thioredoxin-like"/>
    <property type="match status" value="1"/>
</dbReference>
<dbReference type="PROSITE" id="PS00194">
    <property type="entry name" value="THIOREDOXIN_1"/>
    <property type="match status" value="1"/>
</dbReference>
<dbReference type="PROSITE" id="PS51352">
    <property type="entry name" value="THIOREDOXIN_2"/>
    <property type="match status" value="1"/>
</dbReference>
<reference key="1">
    <citation type="journal article" date="1992" name="J. Biol. Chem.">
        <title>Thioredoxins from Dictyostelium discoideum are a developmentally regulated multigene family.</title>
        <authorList>
            <person name="Wetterauer B."/>
            <person name="Jacquot J.-P."/>
            <person name="Veron M."/>
        </authorList>
    </citation>
    <scope>NUCLEOTIDE SEQUENCE [MRNA]</scope>
    <source>
        <strain>AX3</strain>
    </source>
</reference>
<evidence type="ECO:0000250" key="1"/>
<evidence type="ECO:0000255" key="2">
    <source>
        <dbReference type="PROSITE-ProRule" id="PRU00691"/>
    </source>
</evidence>
<evidence type="ECO:0000305" key="3"/>
<protein>
    <recommendedName>
        <fullName>Thioredoxin-2</fullName>
        <shortName>Trx-2</shortName>
    </recommendedName>
</protein>
<gene>
    <name type="primary">trxB</name>
    <name type="synonym">trx2</name>
    <name type="ORF">DDB_G0294491</name>
</gene>
<sequence length="88" mass="10103">MSRVIHISSNEELDKHLQAERLVIDFSAAWCGPCRAISPVFEKLSNEFVTFTFVHVDIDKLSGHPIVKEIRSVPTFYFYRNGAKVSEF</sequence>